<keyword id="KW-1185">Reference proteome</keyword>
<keyword id="KW-0687">Ribonucleoprotein</keyword>
<keyword id="KW-0689">Ribosomal protein</keyword>
<keyword id="KW-0694">RNA-binding</keyword>
<keyword id="KW-0699">rRNA-binding</keyword>
<keyword id="KW-0820">tRNA-binding</keyword>
<organism>
    <name type="scientific">Prochlorococcus marinus (strain MIT 9211)</name>
    <dbReference type="NCBI Taxonomy" id="93059"/>
    <lineage>
        <taxon>Bacteria</taxon>
        <taxon>Bacillati</taxon>
        <taxon>Cyanobacteriota</taxon>
        <taxon>Cyanophyceae</taxon>
        <taxon>Synechococcales</taxon>
        <taxon>Prochlorococcaceae</taxon>
        <taxon>Prochlorococcus</taxon>
    </lineage>
</organism>
<sequence length="179" mass="19828">MLSPKRTKFRKQQRGRMRGVATRGNKIAFGQFALQAQECGWITSRQIEASRRAMTRYVKRGGQIWIRIFPDKPVTMRPAETRMGSGKGNPEFWVAVIKPGRILFEMGGEEITESIAREAMRLAQYKLPIKTKFIALAEGETPTQVGKASSASLANLDEDANSQTDDETSSSGSVATVES</sequence>
<evidence type="ECO:0000255" key="1">
    <source>
        <dbReference type="HAMAP-Rule" id="MF_01342"/>
    </source>
</evidence>
<evidence type="ECO:0000256" key="2">
    <source>
        <dbReference type="SAM" id="MobiDB-lite"/>
    </source>
</evidence>
<evidence type="ECO:0000305" key="3"/>
<gene>
    <name evidence="1" type="primary">rplP</name>
    <name evidence="1" type="synonym">rpl16</name>
    <name type="ordered locus">P9211_16711</name>
</gene>
<name>RL16_PROM4</name>
<feature type="chain" id="PRO_1000143011" description="Large ribosomal subunit protein uL16">
    <location>
        <begin position="1"/>
        <end position="179"/>
    </location>
</feature>
<feature type="region of interest" description="Disordered" evidence="2">
    <location>
        <begin position="147"/>
        <end position="179"/>
    </location>
</feature>
<feature type="compositionally biased region" description="Acidic residues" evidence="2">
    <location>
        <begin position="156"/>
        <end position="168"/>
    </location>
</feature>
<feature type="compositionally biased region" description="Polar residues" evidence="2">
    <location>
        <begin position="169"/>
        <end position="179"/>
    </location>
</feature>
<accession>A9BCP0</accession>
<dbReference type="EMBL" id="CP000878">
    <property type="protein sequence ID" value="ABX09602.1"/>
    <property type="molecule type" value="Genomic_DNA"/>
</dbReference>
<dbReference type="RefSeq" id="WP_012196222.1">
    <property type="nucleotide sequence ID" value="NC_009976.1"/>
</dbReference>
<dbReference type="SMR" id="A9BCP0"/>
<dbReference type="STRING" id="93059.P9211_16711"/>
<dbReference type="KEGG" id="pmj:P9211_16711"/>
<dbReference type="eggNOG" id="COG0197">
    <property type="taxonomic scope" value="Bacteria"/>
</dbReference>
<dbReference type="HOGENOM" id="CLU_078858_0_0_3"/>
<dbReference type="OrthoDB" id="9802589at2"/>
<dbReference type="Proteomes" id="UP000000788">
    <property type="component" value="Chromosome"/>
</dbReference>
<dbReference type="GO" id="GO:1990904">
    <property type="term" value="C:ribonucleoprotein complex"/>
    <property type="evidence" value="ECO:0007669"/>
    <property type="project" value="UniProtKB-KW"/>
</dbReference>
<dbReference type="GO" id="GO:0005840">
    <property type="term" value="C:ribosome"/>
    <property type="evidence" value="ECO:0007669"/>
    <property type="project" value="UniProtKB-KW"/>
</dbReference>
<dbReference type="GO" id="GO:0019843">
    <property type="term" value="F:rRNA binding"/>
    <property type="evidence" value="ECO:0007669"/>
    <property type="project" value="UniProtKB-UniRule"/>
</dbReference>
<dbReference type="GO" id="GO:0003735">
    <property type="term" value="F:structural constituent of ribosome"/>
    <property type="evidence" value="ECO:0007669"/>
    <property type="project" value="InterPro"/>
</dbReference>
<dbReference type="GO" id="GO:0000049">
    <property type="term" value="F:tRNA binding"/>
    <property type="evidence" value="ECO:0007669"/>
    <property type="project" value="UniProtKB-KW"/>
</dbReference>
<dbReference type="GO" id="GO:0006412">
    <property type="term" value="P:translation"/>
    <property type="evidence" value="ECO:0007669"/>
    <property type="project" value="UniProtKB-UniRule"/>
</dbReference>
<dbReference type="CDD" id="cd01433">
    <property type="entry name" value="Ribosomal_L16_L10e"/>
    <property type="match status" value="1"/>
</dbReference>
<dbReference type="FunFam" id="3.90.1170.10:FF:000001">
    <property type="entry name" value="50S ribosomal protein L16"/>
    <property type="match status" value="1"/>
</dbReference>
<dbReference type="Gene3D" id="3.90.1170.10">
    <property type="entry name" value="Ribosomal protein L10e/L16"/>
    <property type="match status" value="1"/>
</dbReference>
<dbReference type="HAMAP" id="MF_01342">
    <property type="entry name" value="Ribosomal_uL16"/>
    <property type="match status" value="1"/>
</dbReference>
<dbReference type="InterPro" id="IPR047873">
    <property type="entry name" value="Ribosomal_uL16"/>
</dbReference>
<dbReference type="InterPro" id="IPR000114">
    <property type="entry name" value="Ribosomal_uL16_bact-type"/>
</dbReference>
<dbReference type="InterPro" id="IPR020798">
    <property type="entry name" value="Ribosomal_uL16_CS"/>
</dbReference>
<dbReference type="InterPro" id="IPR016180">
    <property type="entry name" value="Ribosomal_uL16_dom"/>
</dbReference>
<dbReference type="InterPro" id="IPR036920">
    <property type="entry name" value="Ribosomal_uL16_sf"/>
</dbReference>
<dbReference type="NCBIfam" id="TIGR01164">
    <property type="entry name" value="rplP_bact"/>
    <property type="match status" value="1"/>
</dbReference>
<dbReference type="PANTHER" id="PTHR12220">
    <property type="entry name" value="50S/60S RIBOSOMAL PROTEIN L16"/>
    <property type="match status" value="1"/>
</dbReference>
<dbReference type="PANTHER" id="PTHR12220:SF13">
    <property type="entry name" value="LARGE RIBOSOMAL SUBUNIT PROTEIN UL16M"/>
    <property type="match status" value="1"/>
</dbReference>
<dbReference type="Pfam" id="PF00252">
    <property type="entry name" value="Ribosomal_L16"/>
    <property type="match status" value="1"/>
</dbReference>
<dbReference type="PRINTS" id="PR00060">
    <property type="entry name" value="RIBOSOMALL16"/>
</dbReference>
<dbReference type="SUPFAM" id="SSF54686">
    <property type="entry name" value="Ribosomal protein L16p/L10e"/>
    <property type="match status" value="1"/>
</dbReference>
<dbReference type="PROSITE" id="PS00586">
    <property type="entry name" value="RIBOSOMAL_L16_1"/>
    <property type="match status" value="1"/>
</dbReference>
<dbReference type="PROSITE" id="PS00701">
    <property type="entry name" value="RIBOSOMAL_L16_2"/>
    <property type="match status" value="1"/>
</dbReference>
<comment type="function">
    <text evidence="1">Binds 23S rRNA and is also seen to make contacts with the A and possibly P site tRNAs.</text>
</comment>
<comment type="subunit">
    <text evidence="1">Part of the 50S ribosomal subunit.</text>
</comment>
<comment type="similarity">
    <text evidence="1">Belongs to the universal ribosomal protein uL16 family.</text>
</comment>
<protein>
    <recommendedName>
        <fullName evidence="1">Large ribosomal subunit protein uL16</fullName>
    </recommendedName>
    <alternativeName>
        <fullName evidence="3">50S ribosomal protein L16</fullName>
    </alternativeName>
</protein>
<proteinExistence type="inferred from homology"/>
<reference key="1">
    <citation type="journal article" date="2007" name="PLoS Genet.">
        <title>Patterns and implications of gene gain and loss in the evolution of Prochlorococcus.</title>
        <authorList>
            <person name="Kettler G.C."/>
            <person name="Martiny A.C."/>
            <person name="Huang K."/>
            <person name="Zucker J."/>
            <person name="Coleman M.L."/>
            <person name="Rodrigue S."/>
            <person name="Chen F."/>
            <person name="Lapidus A."/>
            <person name="Ferriera S."/>
            <person name="Johnson J."/>
            <person name="Steglich C."/>
            <person name="Church G.M."/>
            <person name="Richardson P."/>
            <person name="Chisholm S.W."/>
        </authorList>
    </citation>
    <scope>NUCLEOTIDE SEQUENCE [LARGE SCALE GENOMIC DNA]</scope>
    <source>
        <strain>MIT 9211</strain>
    </source>
</reference>